<dbReference type="EMBL" id="AE017282">
    <property type="protein sequence ID" value="AAU91596.1"/>
    <property type="molecule type" value="Genomic_DNA"/>
</dbReference>
<dbReference type="RefSeq" id="WP_010961603.1">
    <property type="nucleotide sequence ID" value="NC_002977.6"/>
</dbReference>
<dbReference type="SMR" id="Q605A8"/>
<dbReference type="STRING" id="243233.MCA2376"/>
<dbReference type="GeneID" id="88224578"/>
<dbReference type="KEGG" id="mca:MCA2376"/>
<dbReference type="eggNOG" id="COG0049">
    <property type="taxonomic scope" value="Bacteria"/>
</dbReference>
<dbReference type="HOGENOM" id="CLU_072226_1_1_6"/>
<dbReference type="Proteomes" id="UP000006821">
    <property type="component" value="Chromosome"/>
</dbReference>
<dbReference type="GO" id="GO:0015935">
    <property type="term" value="C:small ribosomal subunit"/>
    <property type="evidence" value="ECO:0007669"/>
    <property type="project" value="InterPro"/>
</dbReference>
<dbReference type="GO" id="GO:0019843">
    <property type="term" value="F:rRNA binding"/>
    <property type="evidence" value="ECO:0007669"/>
    <property type="project" value="UniProtKB-UniRule"/>
</dbReference>
<dbReference type="GO" id="GO:0003735">
    <property type="term" value="F:structural constituent of ribosome"/>
    <property type="evidence" value="ECO:0007669"/>
    <property type="project" value="InterPro"/>
</dbReference>
<dbReference type="GO" id="GO:0000049">
    <property type="term" value="F:tRNA binding"/>
    <property type="evidence" value="ECO:0007669"/>
    <property type="project" value="UniProtKB-UniRule"/>
</dbReference>
<dbReference type="GO" id="GO:0006412">
    <property type="term" value="P:translation"/>
    <property type="evidence" value="ECO:0007669"/>
    <property type="project" value="UniProtKB-UniRule"/>
</dbReference>
<dbReference type="CDD" id="cd14869">
    <property type="entry name" value="uS7_Bacteria"/>
    <property type="match status" value="1"/>
</dbReference>
<dbReference type="FunFam" id="1.10.455.10:FF:000001">
    <property type="entry name" value="30S ribosomal protein S7"/>
    <property type="match status" value="1"/>
</dbReference>
<dbReference type="Gene3D" id="1.10.455.10">
    <property type="entry name" value="Ribosomal protein S7 domain"/>
    <property type="match status" value="1"/>
</dbReference>
<dbReference type="HAMAP" id="MF_00480_B">
    <property type="entry name" value="Ribosomal_uS7_B"/>
    <property type="match status" value="1"/>
</dbReference>
<dbReference type="InterPro" id="IPR000235">
    <property type="entry name" value="Ribosomal_uS7"/>
</dbReference>
<dbReference type="InterPro" id="IPR005717">
    <property type="entry name" value="Ribosomal_uS7_bac/org-type"/>
</dbReference>
<dbReference type="InterPro" id="IPR020606">
    <property type="entry name" value="Ribosomal_uS7_CS"/>
</dbReference>
<dbReference type="InterPro" id="IPR023798">
    <property type="entry name" value="Ribosomal_uS7_dom"/>
</dbReference>
<dbReference type="InterPro" id="IPR036823">
    <property type="entry name" value="Ribosomal_uS7_dom_sf"/>
</dbReference>
<dbReference type="NCBIfam" id="TIGR01029">
    <property type="entry name" value="rpsG_bact"/>
    <property type="match status" value="1"/>
</dbReference>
<dbReference type="PANTHER" id="PTHR11205">
    <property type="entry name" value="RIBOSOMAL PROTEIN S7"/>
    <property type="match status" value="1"/>
</dbReference>
<dbReference type="Pfam" id="PF00177">
    <property type="entry name" value="Ribosomal_S7"/>
    <property type="match status" value="1"/>
</dbReference>
<dbReference type="PIRSF" id="PIRSF002122">
    <property type="entry name" value="RPS7p_RPS7a_RPS5e_RPS7o"/>
    <property type="match status" value="1"/>
</dbReference>
<dbReference type="SUPFAM" id="SSF47973">
    <property type="entry name" value="Ribosomal protein S7"/>
    <property type="match status" value="1"/>
</dbReference>
<dbReference type="PROSITE" id="PS00052">
    <property type="entry name" value="RIBOSOMAL_S7"/>
    <property type="match status" value="1"/>
</dbReference>
<sequence length="156" mass="17752">MSRRRRSERREVIADPRFGSETLARFVNMLMVSGKKSIAEKIVYGALDHIEAKTSQNSLEVLNKALENVQPVVEVKSRRVGGATYQVPIEVRPARRMALGMRWLIDAARKRGEKGMVMKLAAEVLDAKESRGSAVKKREDTHRMAEANKAFSHYRW</sequence>
<proteinExistence type="inferred from homology"/>
<name>RS7_METCA</name>
<reference key="1">
    <citation type="journal article" date="2004" name="PLoS Biol.">
        <title>Genomic insights into methanotrophy: the complete genome sequence of Methylococcus capsulatus (Bath).</title>
        <authorList>
            <person name="Ward N.L."/>
            <person name="Larsen O."/>
            <person name="Sakwa J."/>
            <person name="Bruseth L."/>
            <person name="Khouri H.M."/>
            <person name="Durkin A.S."/>
            <person name="Dimitrov G."/>
            <person name="Jiang L."/>
            <person name="Scanlan D."/>
            <person name="Kang K.H."/>
            <person name="Lewis M.R."/>
            <person name="Nelson K.E."/>
            <person name="Methe B.A."/>
            <person name="Wu M."/>
            <person name="Heidelberg J.F."/>
            <person name="Paulsen I.T."/>
            <person name="Fouts D.E."/>
            <person name="Ravel J."/>
            <person name="Tettelin H."/>
            <person name="Ren Q."/>
            <person name="Read T.D."/>
            <person name="DeBoy R.T."/>
            <person name="Seshadri R."/>
            <person name="Salzberg S.L."/>
            <person name="Jensen H.B."/>
            <person name="Birkeland N.K."/>
            <person name="Nelson W.C."/>
            <person name="Dodson R.J."/>
            <person name="Grindhaug S.H."/>
            <person name="Holt I.E."/>
            <person name="Eidhammer I."/>
            <person name="Jonasen I."/>
            <person name="Vanaken S."/>
            <person name="Utterback T.R."/>
            <person name="Feldblyum T.V."/>
            <person name="Fraser C.M."/>
            <person name="Lillehaug J.R."/>
            <person name="Eisen J.A."/>
        </authorList>
    </citation>
    <scope>NUCLEOTIDE SEQUENCE [LARGE SCALE GENOMIC DNA]</scope>
    <source>
        <strain>ATCC 33009 / NCIMB 11132 / Bath</strain>
    </source>
</reference>
<evidence type="ECO:0000255" key="1">
    <source>
        <dbReference type="HAMAP-Rule" id="MF_00480"/>
    </source>
</evidence>
<evidence type="ECO:0000305" key="2"/>
<gene>
    <name evidence="1" type="primary">rpsG</name>
    <name type="ordered locus">MCA2376</name>
</gene>
<keyword id="KW-1185">Reference proteome</keyword>
<keyword id="KW-0687">Ribonucleoprotein</keyword>
<keyword id="KW-0689">Ribosomal protein</keyword>
<keyword id="KW-0694">RNA-binding</keyword>
<keyword id="KW-0699">rRNA-binding</keyword>
<keyword id="KW-0820">tRNA-binding</keyword>
<organism>
    <name type="scientific">Methylococcus capsulatus (strain ATCC 33009 / NCIMB 11132 / Bath)</name>
    <dbReference type="NCBI Taxonomy" id="243233"/>
    <lineage>
        <taxon>Bacteria</taxon>
        <taxon>Pseudomonadati</taxon>
        <taxon>Pseudomonadota</taxon>
        <taxon>Gammaproteobacteria</taxon>
        <taxon>Methylococcales</taxon>
        <taxon>Methylococcaceae</taxon>
        <taxon>Methylococcus</taxon>
    </lineage>
</organism>
<feature type="chain" id="PRO_0000124291" description="Small ribosomal subunit protein uS7">
    <location>
        <begin position="1"/>
        <end position="156"/>
    </location>
</feature>
<protein>
    <recommendedName>
        <fullName evidence="1">Small ribosomal subunit protein uS7</fullName>
    </recommendedName>
    <alternativeName>
        <fullName evidence="2">30S ribosomal protein S7</fullName>
    </alternativeName>
</protein>
<comment type="function">
    <text evidence="1">One of the primary rRNA binding proteins, it binds directly to 16S rRNA where it nucleates assembly of the head domain of the 30S subunit. Is located at the subunit interface close to the decoding center, probably blocks exit of the E-site tRNA.</text>
</comment>
<comment type="subunit">
    <text evidence="1">Part of the 30S ribosomal subunit. Contacts proteins S9 and S11.</text>
</comment>
<comment type="similarity">
    <text evidence="1">Belongs to the universal ribosomal protein uS7 family.</text>
</comment>
<accession>Q605A8</accession>